<dbReference type="EMBL" id="U15186">
    <property type="protein sequence ID" value="AAA63106.1"/>
    <property type="molecule type" value="Genomic_DNA"/>
</dbReference>
<dbReference type="EMBL" id="AL583920">
    <property type="protein sequence ID" value="CAC31523.1"/>
    <property type="molecule type" value="Genomic_DNA"/>
</dbReference>
<dbReference type="PIR" id="T09977">
    <property type="entry name" value="T09977"/>
</dbReference>
<dbReference type="RefSeq" id="NP_301836.1">
    <property type="nucleotide sequence ID" value="NC_002677.1"/>
</dbReference>
<dbReference type="RefSeq" id="WP_010908160.1">
    <property type="nucleotide sequence ID" value="NC_002677.1"/>
</dbReference>
<dbReference type="SMR" id="P53006"/>
<dbReference type="STRING" id="272631.gene:17574969"/>
<dbReference type="KEGG" id="mle:ML1142"/>
<dbReference type="PATRIC" id="fig|272631.5.peg.2064"/>
<dbReference type="Leproma" id="ML1142"/>
<dbReference type="eggNOG" id="COG0711">
    <property type="taxonomic scope" value="Bacteria"/>
</dbReference>
<dbReference type="eggNOG" id="COG0712">
    <property type="taxonomic scope" value="Bacteria"/>
</dbReference>
<dbReference type="HOGENOM" id="CLU_722652_0_0_11"/>
<dbReference type="OrthoDB" id="5242917at2"/>
<dbReference type="Proteomes" id="UP000000806">
    <property type="component" value="Chromosome"/>
</dbReference>
<dbReference type="GO" id="GO:0005886">
    <property type="term" value="C:plasma membrane"/>
    <property type="evidence" value="ECO:0007669"/>
    <property type="project" value="UniProtKB-SubCell"/>
</dbReference>
<dbReference type="GO" id="GO:0045259">
    <property type="term" value="C:proton-transporting ATP synthase complex"/>
    <property type="evidence" value="ECO:0007669"/>
    <property type="project" value="UniProtKB-KW"/>
</dbReference>
<dbReference type="GO" id="GO:0046933">
    <property type="term" value="F:proton-transporting ATP synthase activity, rotational mechanism"/>
    <property type="evidence" value="ECO:0007669"/>
    <property type="project" value="UniProtKB-UniRule"/>
</dbReference>
<dbReference type="CDD" id="cd06503">
    <property type="entry name" value="ATP-synt_Fo_b"/>
    <property type="match status" value="1"/>
</dbReference>
<dbReference type="Gene3D" id="1.20.5.620">
    <property type="entry name" value="F1F0 ATP synthase subunit B, membrane domain"/>
    <property type="match status" value="1"/>
</dbReference>
<dbReference type="HAMAP" id="MF_01398">
    <property type="entry name" value="ATP_synth_b_bprime"/>
    <property type="match status" value="1"/>
</dbReference>
<dbReference type="HAMAP" id="MF_01416">
    <property type="entry name" value="ATP_synth_delta_bact"/>
    <property type="match status" value="1"/>
</dbReference>
<dbReference type="InterPro" id="IPR028987">
    <property type="entry name" value="ATP_synth_B-like_membr_sf"/>
</dbReference>
<dbReference type="InterPro" id="IPR002146">
    <property type="entry name" value="ATP_synth_b/b'su_bac/chlpt"/>
</dbReference>
<dbReference type="InterPro" id="IPR000711">
    <property type="entry name" value="ATPase_OSCP/dsu"/>
</dbReference>
<dbReference type="NCBIfam" id="NF009961">
    <property type="entry name" value="PRK13428.1"/>
    <property type="match status" value="1"/>
</dbReference>
<dbReference type="NCBIfam" id="NF009967">
    <property type="entry name" value="PRK13430.1"/>
    <property type="match status" value="1"/>
</dbReference>
<dbReference type="PANTHER" id="PTHR11910">
    <property type="entry name" value="ATP SYNTHASE DELTA CHAIN"/>
    <property type="match status" value="1"/>
</dbReference>
<dbReference type="Pfam" id="PF00430">
    <property type="entry name" value="ATP-synt_B"/>
    <property type="match status" value="1"/>
</dbReference>
<dbReference type="Pfam" id="PF00213">
    <property type="entry name" value="OSCP"/>
    <property type="match status" value="1"/>
</dbReference>
<dbReference type="PRINTS" id="PR00125">
    <property type="entry name" value="ATPASEDELTA"/>
</dbReference>
<dbReference type="SUPFAM" id="SSF81573">
    <property type="entry name" value="F1F0 ATP synthase subunit B, membrane domain"/>
    <property type="match status" value="1"/>
</dbReference>
<protein>
    <recommendedName>
        <fullName>ATP synthase subunit b-delta</fullName>
    </recommendedName>
    <domain>
        <recommendedName>
            <fullName>ATP synthase subunit b</fullName>
        </recommendedName>
        <alternativeName>
            <fullName>ATP synthase F(0) sector subunit b 2</fullName>
        </alternativeName>
        <alternativeName>
            <fullName>ATPase subunit I 2</fullName>
        </alternativeName>
        <alternativeName>
            <fullName>F-type ATPase subunit b 2</fullName>
            <shortName>F-ATPase subunit b 2</shortName>
        </alternativeName>
    </domain>
    <domain>
        <recommendedName>
            <fullName>ATP synthase subunit delta</fullName>
        </recommendedName>
        <alternativeName>
            <fullName>ATP synthase F(1) sector subunit delta</fullName>
        </alternativeName>
        <alternativeName>
            <fullName>F-type ATPase subunit delta</fullName>
            <shortName>F-ATPase subunit delta</shortName>
        </alternativeName>
    </domain>
</protein>
<sequence>MSTFIGQLVGFAAIVYLVWWYVVPPVCRLMRARRDAVRQQLTEAAEAADRLVEASQAHTKATEDAKVEAQRVVKEAVEDAKRIVEQLQAQADVEAERIKLQGARQVELLRAQLTRQLRLKFGHESVRQAAELVRNHVADAVQQSATVDRFLDDLDAMTPKGADVEYPLLAKMRSASRRALVDLADRFGAIAKSLDNQALYTLAGELVSVAKMLDREIVVTRYLTVPVEDEAPRVKLIDRLVSAHVGDPTMEILRAAVSERWSANTDLVDALEHISRQALLEVAEREDQIDEVEDQVFRFSRILDVAPRLAILLDDYAVPADSRVRLLCNVLQSASSVVNPIAVALLSQTVELLRGQPAKEAILFLAEVAVARRGEVVAQVSAAAEISDAQRTRLTEVLSRIYGHPVTVQMQIDAALLGGLSIVVGDEVIDGTLSSCLVAAEAALPD</sequence>
<evidence type="ECO:0000250" key="1"/>
<evidence type="ECO:0000255" key="2"/>
<evidence type="ECO:0000305" key="3"/>
<feature type="chain" id="PRO_0000193472" description="ATP synthase subunit b-delta">
    <location>
        <begin position="1"/>
        <end position="446"/>
    </location>
</feature>
<feature type="transmembrane region" description="Helical" evidence="2">
    <location>
        <begin position="4"/>
        <end position="24"/>
    </location>
</feature>
<feature type="region of interest" description="ATP synthase subunit b">
    <location>
        <begin position="1"/>
        <end position="168"/>
    </location>
</feature>
<feature type="region of interest" description="ATP synthase subunit delta">
    <location>
        <begin position="169"/>
        <end position="446"/>
    </location>
</feature>
<proteinExistence type="inferred from homology"/>
<organism>
    <name type="scientific">Mycobacterium leprae (strain TN)</name>
    <dbReference type="NCBI Taxonomy" id="272631"/>
    <lineage>
        <taxon>Bacteria</taxon>
        <taxon>Bacillati</taxon>
        <taxon>Actinomycetota</taxon>
        <taxon>Actinomycetes</taxon>
        <taxon>Mycobacteriales</taxon>
        <taxon>Mycobacteriaceae</taxon>
        <taxon>Mycobacterium</taxon>
    </lineage>
</organism>
<name>ATPFD_MYCLE</name>
<keyword id="KW-0066">ATP synthesis</keyword>
<keyword id="KW-1003">Cell membrane</keyword>
<keyword id="KW-0138">CF(0)</keyword>
<keyword id="KW-0139">CF(1)</keyword>
<keyword id="KW-0375">Hydrogen ion transport</keyword>
<keyword id="KW-0406">Ion transport</keyword>
<keyword id="KW-0472">Membrane</keyword>
<keyword id="KW-0511">Multifunctional enzyme</keyword>
<keyword id="KW-1185">Reference proteome</keyword>
<keyword id="KW-0812">Transmembrane</keyword>
<keyword id="KW-1133">Transmembrane helix</keyword>
<keyword id="KW-0813">Transport</keyword>
<accession>P53006</accession>
<reference key="1">
    <citation type="submission" date="1994-09" db="EMBL/GenBank/DDBJ databases">
        <authorList>
            <person name="Smith D.R."/>
            <person name="Robison K."/>
        </authorList>
    </citation>
    <scope>NUCLEOTIDE SEQUENCE [GENOMIC DNA]</scope>
</reference>
<reference key="2">
    <citation type="journal article" date="2001" name="Nature">
        <title>Massive gene decay in the leprosy bacillus.</title>
        <authorList>
            <person name="Cole S.T."/>
            <person name="Eiglmeier K."/>
            <person name="Parkhill J."/>
            <person name="James K.D."/>
            <person name="Thomson N.R."/>
            <person name="Wheeler P.R."/>
            <person name="Honore N."/>
            <person name="Garnier T."/>
            <person name="Churcher C.M."/>
            <person name="Harris D.E."/>
            <person name="Mungall K.L."/>
            <person name="Basham D."/>
            <person name="Brown D."/>
            <person name="Chillingworth T."/>
            <person name="Connor R."/>
            <person name="Davies R.M."/>
            <person name="Devlin K."/>
            <person name="Duthoy S."/>
            <person name="Feltwell T."/>
            <person name="Fraser A."/>
            <person name="Hamlin N."/>
            <person name="Holroyd S."/>
            <person name="Hornsby T."/>
            <person name="Jagels K."/>
            <person name="Lacroix C."/>
            <person name="Maclean J."/>
            <person name="Moule S."/>
            <person name="Murphy L.D."/>
            <person name="Oliver K."/>
            <person name="Quail M.A."/>
            <person name="Rajandream M.A."/>
            <person name="Rutherford K.M."/>
            <person name="Rutter S."/>
            <person name="Seeger K."/>
            <person name="Simon S."/>
            <person name="Simmonds M."/>
            <person name="Skelton J."/>
            <person name="Squares R."/>
            <person name="Squares S."/>
            <person name="Stevens K."/>
            <person name="Taylor K."/>
            <person name="Whitehead S."/>
            <person name="Woodward J.R."/>
            <person name="Barrell B.G."/>
        </authorList>
    </citation>
    <scope>NUCLEOTIDE SEQUENCE [LARGE SCALE GENOMIC DNA]</scope>
    <source>
        <strain>TN</strain>
    </source>
</reference>
<gene>
    <name type="primary">atpFH</name>
    <name type="synonym">atpF</name>
    <name type="synonym">atpH</name>
    <name type="ordered locus">ML1142</name>
</gene>
<comment type="function">
    <text evidence="1">F(1)F(0) ATP synthase produces ATP from ADP in the presence of a proton or sodium gradient. F-type ATPases consist of two structural domains, F(1) containing the extramembraneous catalytic core and F(0) containing the membrane proton channel, linked together by a central stalk and a peripheral stalk. During catalysis, ATP synthesis in the catalytic domain of F(1) is coupled via a rotary mechanism of the central stalk subunits to proton translocation (By similarity).</text>
</comment>
<comment type="function">
    <text evidence="1">This fusion protein includes a component of the F(0) channel (subunit b) and of the F(1) subunit (subunit delta). Two copies of subunit b and one of delta together form the peripheral 'stator' stalk which links F(1) to F(0) (By similarity).</text>
</comment>
<comment type="subunit">
    <text evidence="1">F-type ATPases have 2 components, F(1) - the catalytic core - and F(0) - the membrane proton channel. F(1) has five subunits: alpha(3), beta(3), gamma(1), delta(1), epsilon(1). F(0) has three main subunits: a(1), b(2) and c(10-14). The alpha and beta chains form an alternating ring which encloses part of the gamma chain. F(1) is attached to F(0) by a central stalk formed by the gamma and epsilon chains, while a peripheral stalk is formed by the delta and b chains (By similarity).</text>
</comment>
<comment type="subcellular location">
    <subcellularLocation>
        <location evidence="1">Cell membrane</location>
        <topology evidence="1">Single-pass membrane protein</topology>
    </subcellularLocation>
</comment>
<comment type="similarity">
    <text evidence="3">In the N-terminal section; belongs to the ATPase B chain family.</text>
</comment>
<comment type="similarity">
    <text evidence="3">In the C-terminal section; belongs to the ATPase delta chain family.</text>
</comment>